<protein>
    <recommendedName>
        <fullName>Transcriptional regulatory protein SrrA</fullName>
    </recommendedName>
    <alternativeName>
        <fullName>Staphylococcal respiratory response protein A</fullName>
    </alternativeName>
</protein>
<name>SRRA_STAAW</name>
<feature type="chain" id="PRO_0000081253" description="Transcriptional regulatory protein SrrA">
    <location>
        <begin position="1"/>
        <end position="241"/>
    </location>
</feature>
<feature type="domain" description="Response regulatory" evidence="4">
    <location>
        <begin position="4"/>
        <end position="117"/>
    </location>
</feature>
<feature type="DNA-binding region" description="OmpR/PhoB-type" evidence="5">
    <location>
        <begin position="133"/>
        <end position="233"/>
    </location>
</feature>
<feature type="modified residue" description="4-aspartylphosphate" evidence="4">
    <location>
        <position position="53"/>
    </location>
</feature>
<keyword id="KW-0010">Activator</keyword>
<keyword id="KW-0963">Cytoplasm</keyword>
<keyword id="KW-0238">DNA-binding</keyword>
<keyword id="KW-0597">Phosphoprotein</keyword>
<keyword id="KW-0678">Repressor</keyword>
<keyword id="KW-0804">Transcription</keyword>
<keyword id="KW-0805">Transcription regulation</keyword>
<keyword id="KW-0902">Two-component regulatory system</keyword>
<sequence length="241" mass="28161">MSNEILIVDDEDRIRRLLKMYLERESFEIHEASNGQEAYELAMENNYACILLDLMLPEMDGIQVATKLREHKQTPIIMLTAKGEETNRVEGFESGADDYIVKPFSPREVVLRVKALLRRTQSTTVEQSEPHARDVIEFKHLEIDNDAHRVLADNQEVNLTPKEYELLIYLAKTPNKVFDREQLLKEVWHYEFYGDLRTVDTHVKRLREKLNRVSSEAAHMIQTVWGVGYKFEVKSNDEPAK</sequence>
<dbReference type="EMBL" id="BA000033">
    <property type="protein sequence ID" value="BAB95311.1"/>
    <property type="molecule type" value="Genomic_DNA"/>
</dbReference>
<dbReference type="RefSeq" id="WP_000064078.1">
    <property type="nucleotide sequence ID" value="NC_003923.1"/>
</dbReference>
<dbReference type="SMR" id="Q7A0U4"/>
<dbReference type="GeneID" id="98345856"/>
<dbReference type="KEGG" id="sam:MW1446"/>
<dbReference type="HOGENOM" id="CLU_000445_30_4_9"/>
<dbReference type="GO" id="GO:0005829">
    <property type="term" value="C:cytosol"/>
    <property type="evidence" value="ECO:0007669"/>
    <property type="project" value="TreeGrafter"/>
</dbReference>
<dbReference type="GO" id="GO:0032993">
    <property type="term" value="C:protein-DNA complex"/>
    <property type="evidence" value="ECO:0007669"/>
    <property type="project" value="TreeGrafter"/>
</dbReference>
<dbReference type="GO" id="GO:0000156">
    <property type="term" value="F:phosphorelay response regulator activity"/>
    <property type="evidence" value="ECO:0007669"/>
    <property type="project" value="TreeGrafter"/>
</dbReference>
<dbReference type="GO" id="GO:0000976">
    <property type="term" value="F:transcription cis-regulatory region binding"/>
    <property type="evidence" value="ECO:0007669"/>
    <property type="project" value="TreeGrafter"/>
</dbReference>
<dbReference type="GO" id="GO:0006355">
    <property type="term" value="P:regulation of DNA-templated transcription"/>
    <property type="evidence" value="ECO:0007669"/>
    <property type="project" value="InterPro"/>
</dbReference>
<dbReference type="CDD" id="cd17574">
    <property type="entry name" value="REC_OmpR"/>
    <property type="match status" value="1"/>
</dbReference>
<dbReference type="CDD" id="cd00383">
    <property type="entry name" value="trans_reg_C"/>
    <property type="match status" value="1"/>
</dbReference>
<dbReference type="FunFam" id="3.40.50.2300:FF:000001">
    <property type="entry name" value="DNA-binding response regulator PhoB"/>
    <property type="match status" value="1"/>
</dbReference>
<dbReference type="FunFam" id="1.10.10.10:FF:000018">
    <property type="entry name" value="DNA-binding response regulator ResD"/>
    <property type="match status" value="1"/>
</dbReference>
<dbReference type="Gene3D" id="3.40.50.2300">
    <property type="match status" value="1"/>
</dbReference>
<dbReference type="Gene3D" id="6.10.250.690">
    <property type="match status" value="1"/>
</dbReference>
<dbReference type="Gene3D" id="1.10.10.10">
    <property type="entry name" value="Winged helix-like DNA-binding domain superfamily/Winged helix DNA-binding domain"/>
    <property type="match status" value="1"/>
</dbReference>
<dbReference type="InterPro" id="IPR011006">
    <property type="entry name" value="CheY-like_superfamily"/>
</dbReference>
<dbReference type="InterPro" id="IPR001867">
    <property type="entry name" value="OmpR/PhoB-type_DNA-bd"/>
</dbReference>
<dbReference type="InterPro" id="IPR001789">
    <property type="entry name" value="Sig_transdc_resp-reg_receiver"/>
</dbReference>
<dbReference type="InterPro" id="IPR039420">
    <property type="entry name" value="WalR-like"/>
</dbReference>
<dbReference type="InterPro" id="IPR036388">
    <property type="entry name" value="WH-like_DNA-bd_sf"/>
</dbReference>
<dbReference type="PANTHER" id="PTHR48111">
    <property type="entry name" value="REGULATOR OF RPOS"/>
    <property type="match status" value="1"/>
</dbReference>
<dbReference type="PANTHER" id="PTHR48111:SF44">
    <property type="entry name" value="TRANSCRIPTIONAL REGULATORY PROTEIN RESD"/>
    <property type="match status" value="1"/>
</dbReference>
<dbReference type="Pfam" id="PF00072">
    <property type="entry name" value="Response_reg"/>
    <property type="match status" value="1"/>
</dbReference>
<dbReference type="Pfam" id="PF00486">
    <property type="entry name" value="Trans_reg_C"/>
    <property type="match status" value="1"/>
</dbReference>
<dbReference type="SMART" id="SM00448">
    <property type="entry name" value="REC"/>
    <property type="match status" value="1"/>
</dbReference>
<dbReference type="SMART" id="SM00862">
    <property type="entry name" value="Trans_reg_C"/>
    <property type="match status" value="1"/>
</dbReference>
<dbReference type="SUPFAM" id="SSF52172">
    <property type="entry name" value="CheY-like"/>
    <property type="match status" value="1"/>
</dbReference>
<dbReference type="PROSITE" id="PS51755">
    <property type="entry name" value="OMPR_PHOB"/>
    <property type="match status" value="1"/>
</dbReference>
<dbReference type="PROSITE" id="PS50110">
    <property type="entry name" value="RESPONSE_REGULATORY"/>
    <property type="match status" value="1"/>
</dbReference>
<reference key="1">
    <citation type="journal article" date="2002" name="Lancet">
        <title>Genome and virulence determinants of high virulence community-acquired MRSA.</title>
        <authorList>
            <person name="Baba T."/>
            <person name="Takeuchi F."/>
            <person name="Kuroda M."/>
            <person name="Yuzawa H."/>
            <person name="Aoki K."/>
            <person name="Oguchi A."/>
            <person name="Nagai Y."/>
            <person name="Iwama N."/>
            <person name="Asano K."/>
            <person name="Naimi T."/>
            <person name="Kuroda H."/>
            <person name="Cui L."/>
            <person name="Yamamoto K."/>
            <person name="Hiramatsu K."/>
        </authorList>
    </citation>
    <scope>NUCLEOTIDE SEQUENCE [LARGE SCALE GENOMIC DNA]</scope>
    <source>
        <strain>MW2</strain>
    </source>
</reference>
<proteinExistence type="inferred from homology"/>
<evidence type="ECO:0000250" key="1"/>
<evidence type="ECO:0000250" key="2">
    <source>
        <dbReference type="UniProtKB" id="Q5HFT0"/>
    </source>
</evidence>
<evidence type="ECO:0000250" key="3">
    <source>
        <dbReference type="UniProtKB" id="Q9L524"/>
    </source>
</evidence>
<evidence type="ECO:0000255" key="4">
    <source>
        <dbReference type="PROSITE-ProRule" id="PRU00169"/>
    </source>
</evidence>
<evidence type="ECO:0000255" key="5">
    <source>
        <dbReference type="PROSITE-ProRule" id="PRU01091"/>
    </source>
</evidence>
<accession>Q7A0U4</accession>
<gene>
    <name type="primary">srrA</name>
    <name type="ordered locus">MW1446</name>
</gene>
<comment type="function">
    <text evidence="2 3">Member of the two-component regulatory system SrrA/SrrB, which is involved in the global regulation of staphylococcal virulence factors in response to environmental oxygen levels as well as biofilm formation. Also plays an essential role in host-derived nitric oxide resistance by regulating hmp/flavohemoglobin, an enzyme that detoxifies nitric oxide by converting it to nitrate (By similarity). Functions as a transcription regulator by direct binding to promoter regions of target genes (By similarity).</text>
</comment>
<comment type="subcellular location">
    <subcellularLocation>
        <location evidence="1">Cytoplasm</location>
    </subcellularLocation>
</comment>
<comment type="PTM">
    <text evidence="1">Phosphorylated by SrrB.</text>
</comment>
<organism>
    <name type="scientific">Staphylococcus aureus (strain MW2)</name>
    <dbReference type="NCBI Taxonomy" id="196620"/>
    <lineage>
        <taxon>Bacteria</taxon>
        <taxon>Bacillati</taxon>
        <taxon>Bacillota</taxon>
        <taxon>Bacilli</taxon>
        <taxon>Bacillales</taxon>
        <taxon>Staphylococcaceae</taxon>
        <taxon>Staphylococcus</taxon>
    </lineage>
</organism>